<protein>
    <recommendedName>
        <fullName evidence="1">Large ribosomal subunit protein bL25</fullName>
    </recommendedName>
    <alternativeName>
        <fullName evidence="3">50S ribosomal protein L25</fullName>
    </alternativeName>
    <alternativeName>
        <fullName evidence="1">General stress protein CTC</fullName>
    </alternativeName>
</protein>
<keyword id="KW-0687">Ribonucleoprotein</keyword>
<keyword id="KW-0689">Ribosomal protein</keyword>
<keyword id="KW-0694">RNA-binding</keyword>
<keyword id="KW-0699">rRNA-binding</keyword>
<organism>
    <name type="scientific">Prosthecochloris aestuarii (strain DSM 271 / SK 413)</name>
    <dbReference type="NCBI Taxonomy" id="290512"/>
    <lineage>
        <taxon>Bacteria</taxon>
        <taxon>Pseudomonadati</taxon>
        <taxon>Chlorobiota</taxon>
        <taxon>Chlorobiia</taxon>
        <taxon>Chlorobiales</taxon>
        <taxon>Chlorobiaceae</taxon>
        <taxon>Prosthecochloris</taxon>
    </lineage>
</organism>
<comment type="function">
    <text evidence="1">This is one of the proteins that binds to the 5S RNA in the ribosome where it forms part of the central protuberance.</text>
</comment>
<comment type="subunit">
    <text evidence="1">Part of the 50S ribosomal subunit; part of the 5S rRNA/L5/L18/L25 subcomplex. Contacts the 5S rRNA. Binds to the 5S rRNA independently of L5 and L18.</text>
</comment>
<comment type="similarity">
    <text evidence="1">Belongs to the bacterial ribosomal protein bL25 family. CTC subfamily.</text>
</comment>
<reference key="1">
    <citation type="submission" date="2008-06" db="EMBL/GenBank/DDBJ databases">
        <title>Complete sequence of chromosome of Prosthecochloris aestuarii DSM 271.</title>
        <authorList>
            <consortium name="US DOE Joint Genome Institute"/>
            <person name="Lucas S."/>
            <person name="Copeland A."/>
            <person name="Lapidus A."/>
            <person name="Glavina del Rio T."/>
            <person name="Dalin E."/>
            <person name="Tice H."/>
            <person name="Bruce D."/>
            <person name="Goodwin L."/>
            <person name="Pitluck S."/>
            <person name="Schmutz J."/>
            <person name="Larimer F."/>
            <person name="Land M."/>
            <person name="Hauser L."/>
            <person name="Kyrpides N."/>
            <person name="Anderson I."/>
            <person name="Liu Z."/>
            <person name="Li T."/>
            <person name="Zhao F."/>
            <person name="Overmann J."/>
            <person name="Bryant D.A."/>
            <person name="Richardson P."/>
        </authorList>
    </citation>
    <scope>NUCLEOTIDE SEQUENCE [LARGE SCALE GENOMIC DNA]</scope>
    <source>
        <strain>DSM 271 / SK 413</strain>
    </source>
</reference>
<feature type="chain" id="PRO_1000142546" description="Large ribosomal subunit protein bL25">
    <location>
        <begin position="1"/>
        <end position="201"/>
    </location>
</feature>
<feature type="region of interest" description="Disordered" evidence="2">
    <location>
        <begin position="179"/>
        <end position="201"/>
    </location>
</feature>
<feature type="compositionally biased region" description="Acidic residues" evidence="2">
    <location>
        <begin position="190"/>
        <end position="201"/>
    </location>
</feature>
<gene>
    <name evidence="1" type="primary">rplY</name>
    <name evidence="1" type="synonym">ctc</name>
    <name type="ordered locus">Paes_1493</name>
</gene>
<name>RL25_PROA2</name>
<accession>B4S8X6</accession>
<proteinExistence type="inferred from homology"/>
<sequence length="201" mass="22016">METIVLAVEPRTCSKNEAKTLRTEGKVPAVVYHNGEDNQHICVNELALEKLVHSPESHIINLEFPDGKNRRSLIKDVQFDPVTDKVIHADFQFFSAGEVLEMEVPVTFTGKGPGIEAGGRLQALVHALTVKGVPSSIPDHITLDISAMELGETMHIKEIPAEIAAGKFEFVGEPETPVVSITAPRVEAEKTEEEEPESTEE</sequence>
<evidence type="ECO:0000255" key="1">
    <source>
        <dbReference type="HAMAP-Rule" id="MF_01334"/>
    </source>
</evidence>
<evidence type="ECO:0000256" key="2">
    <source>
        <dbReference type="SAM" id="MobiDB-lite"/>
    </source>
</evidence>
<evidence type="ECO:0000305" key="3"/>
<dbReference type="EMBL" id="CP001108">
    <property type="protein sequence ID" value="ACF46513.1"/>
    <property type="molecule type" value="Genomic_DNA"/>
</dbReference>
<dbReference type="RefSeq" id="WP_012506046.1">
    <property type="nucleotide sequence ID" value="NC_011059.1"/>
</dbReference>
<dbReference type="SMR" id="B4S8X6"/>
<dbReference type="STRING" id="290512.Paes_1493"/>
<dbReference type="KEGG" id="paa:Paes_1493"/>
<dbReference type="eggNOG" id="COG1825">
    <property type="taxonomic scope" value="Bacteria"/>
</dbReference>
<dbReference type="HOGENOM" id="CLU_075939_2_1_10"/>
<dbReference type="Proteomes" id="UP000002725">
    <property type="component" value="Chromosome"/>
</dbReference>
<dbReference type="GO" id="GO:0022625">
    <property type="term" value="C:cytosolic large ribosomal subunit"/>
    <property type="evidence" value="ECO:0007669"/>
    <property type="project" value="TreeGrafter"/>
</dbReference>
<dbReference type="GO" id="GO:0008097">
    <property type="term" value="F:5S rRNA binding"/>
    <property type="evidence" value="ECO:0007669"/>
    <property type="project" value="InterPro"/>
</dbReference>
<dbReference type="GO" id="GO:0003735">
    <property type="term" value="F:structural constituent of ribosome"/>
    <property type="evidence" value="ECO:0007669"/>
    <property type="project" value="InterPro"/>
</dbReference>
<dbReference type="GO" id="GO:0006412">
    <property type="term" value="P:translation"/>
    <property type="evidence" value="ECO:0007669"/>
    <property type="project" value="UniProtKB-UniRule"/>
</dbReference>
<dbReference type="CDD" id="cd00495">
    <property type="entry name" value="Ribosomal_L25_TL5_CTC"/>
    <property type="match status" value="1"/>
</dbReference>
<dbReference type="Gene3D" id="2.170.120.20">
    <property type="entry name" value="Ribosomal protein L25, beta domain"/>
    <property type="match status" value="1"/>
</dbReference>
<dbReference type="Gene3D" id="2.40.240.10">
    <property type="entry name" value="Ribosomal Protein L25, Chain P"/>
    <property type="match status" value="1"/>
</dbReference>
<dbReference type="HAMAP" id="MF_01334">
    <property type="entry name" value="Ribosomal_bL25_CTC"/>
    <property type="match status" value="1"/>
</dbReference>
<dbReference type="InterPro" id="IPR020056">
    <property type="entry name" value="Rbsml_bL25/Gln-tRNA_synth_N"/>
</dbReference>
<dbReference type="InterPro" id="IPR011035">
    <property type="entry name" value="Ribosomal_bL25/Gln-tRNA_synth"/>
</dbReference>
<dbReference type="InterPro" id="IPR020057">
    <property type="entry name" value="Ribosomal_bL25_b-dom"/>
</dbReference>
<dbReference type="InterPro" id="IPR037121">
    <property type="entry name" value="Ribosomal_bL25_C"/>
</dbReference>
<dbReference type="InterPro" id="IPR001021">
    <property type="entry name" value="Ribosomal_bL25_long"/>
</dbReference>
<dbReference type="InterPro" id="IPR029751">
    <property type="entry name" value="Ribosomal_L25_dom"/>
</dbReference>
<dbReference type="InterPro" id="IPR020930">
    <property type="entry name" value="Ribosomal_uL5_bac-type"/>
</dbReference>
<dbReference type="NCBIfam" id="TIGR00731">
    <property type="entry name" value="bL25_bact_ctc"/>
    <property type="match status" value="1"/>
</dbReference>
<dbReference type="NCBIfam" id="NF004136">
    <property type="entry name" value="PRK05618.3-2"/>
    <property type="match status" value="1"/>
</dbReference>
<dbReference type="PANTHER" id="PTHR33284">
    <property type="entry name" value="RIBOSOMAL PROTEIN L25/GLN-TRNA SYNTHETASE, ANTI-CODON-BINDING DOMAIN-CONTAINING PROTEIN"/>
    <property type="match status" value="1"/>
</dbReference>
<dbReference type="PANTHER" id="PTHR33284:SF1">
    <property type="entry name" value="RIBOSOMAL PROTEIN L25_GLN-TRNA SYNTHETASE, ANTI-CODON-BINDING DOMAIN-CONTAINING PROTEIN"/>
    <property type="match status" value="1"/>
</dbReference>
<dbReference type="Pfam" id="PF01386">
    <property type="entry name" value="Ribosomal_L25p"/>
    <property type="match status" value="1"/>
</dbReference>
<dbReference type="Pfam" id="PF14693">
    <property type="entry name" value="Ribosomal_TL5_C"/>
    <property type="match status" value="1"/>
</dbReference>
<dbReference type="SUPFAM" id="SSF50715">
    <property type="entry name" value="Ribosomal protein L25-like"/>
    <property type="match status" value="1"/>
</dbReference>